<sequence length="538" mass="61543">MARKGNPISVRLDLNRSSDPSRFSDYYYGKSLYQDVNLRSYFSSIRPPTILTFGFRLGRCIILHFPKRTFIHFFLPRRPLRLKRRDKSRPGKDKGRWWAFGKVGPIGCLHSSEGTEEERNEVRGRGAGKRVESIDREKQNEIRIWPKKMQRYGYHDRSPSRKKNFSKSLRVSGAFKHPKYAGVVNDIAFLIENDGPTSHLLKRTLPAVRPSLNYSVMQYFFNTKNKMHFDPVVVLNHFVAPGVAEPSTMGGAKGGSLDKRIRSRIAFFVESSTSEKKCLARAKKRLIHFIRQANDLRFAGTTKTTISLFPFFGATFFFPRDGVGVYNNPFFEYAREQLLGQLRIKCRNLMGKDKVMELIEKFIYLGRIGKLIKGIEMMIEIILRKRIIPYGYNSYLNEVQKMRSFLSNRTNTNTLIESVKIKSVYQSASLIAQDISFQLGNNPISFRSIFSQIVKDIPLIMPKGVEGIRICCSGRLGGAEIARTECGKYGKTSCNVFNQKIDYALAEVSTRNGISGVKVRISYSQNKKGRAISETYEI</sequence>
<proteinExistence type="inferred from homology"/>
<name>RT03_ORYSJ</name>
<reference key="1">
    <citation type="journal article" date="1995" name="Curr. Genet.">
        <title>The rps3-rpl16-nad3-rps12 gene cluster in rice mitochondrial DNA is transcribed from alternative promoters.</title>
        <authorList>
            <person name="Nakazono M."/>
            <person name="Itadani H."/>
            <person name="Wakasugi T."/>
            <person name="Tsutsumi N."/>
            <person name="Sugiura M."/>
            <person name="Hirai A."/>
        </authorList>
    </citation>
    <scope>NUCLEOTIDE SEQUENCE [GENOMIC DNA]</scope>
    <source>
        <strain>cv. Nipponbare</strain>
        <tissue>Leaf</tissue>
    </source>
</reference>
<reference key="2">
    <citation type="journal article" date="2002" name="Mol. Genet. Genomics">
        <title>The complete sequence of the rice (Oryza sativa L.) mitochondrial genome: frequent DNA sequence acquisition and loss during the evolution of flowering plants.</title>
        <authorList>
            <person name="Notsu Y."/>
            <person name="Masood S."/>
            <person name="Nishikawa T."/>
            <person name="Kubo N."/>
            <person name="Akiduki G."/>
            <person name="Nakazono M."/>
            <person name="Hirai A."/>
            <person name="Kadowaki K."/>
        </authorList>
    </citation>
    <scope>NUCLEOTIDE SEQUENCE [LARGE SCALE GENOMIC DNA]</scope>
    <source>
        <strain>cv. Nipponbare</strain>
    </source>
</reference>
<reference key="3">
    <citation type="journal article" date="1994" name="Plant Cell Physiol.">
        <title>Nucleotide sequence of a 28-kbp portion of rice mitochondrial DNA: the existence of many sequences that correspond to parts of mitochondrial genes in intergenic regions.</title>
        <authorList>
            <person name="Itadani H."/>
            <person name="Wakasugi T."/>
            <person name="Sugita M."/>
            <person name="Sugiura M."/>
            <person name="Nakazono M."/>
            <person name="Hirai A."/>
        </authorList>
    </citation>
    <scope>NUCLEOTIDE SEQUENCE [GENOMIC DNA] OF 1-499</scope>
    <source>
        <strain>cv. Nipponbare</strain>
        <tissue>Leaf</tissue>
    </source>
</reference>
<dbReference type="EMBL" id="D21251">
    <property type="protein sequence ID" value="BAA04792.1"/>
    <property type="molecule type" value="Genomic_DNA"/>
</dbReference>
<dbReference type="EMBL" id="BA000029">
    <property type="status" value="NOT_ANNOTATED_CDS"/>
    <property type="molecule type" value="Genomic_DNA"/>
</dbReference>
<dbReference type="EMBL" id="D32052">
    <property type="protein sequence ID" value="BAA06834.1"/>
    <property type="molecule type" value="Genomic_DNA"/>
</dbReference>
<dbReference type="PIR" id="T03213">
    <property type="entry name" value="T03213"/>
</dbReference>
<dbReference type="PIR" id="T03232">
    <property type="entry name" value="T03232"/>
</dbReference>
<dbReference type="RefSeq" id="YP_002000565.1">
    <property type="nucleotide sequence ID" value="NC_011033.1"/>
</dbReference>
<dbReference type="SMR" id="P46773"/>
<dbReference type="FunCoup" id="P46773">
    <property type="interactions" value="1"/>
</dbReference>
<dbReference type="STRING" id="39947.P46773"/>
<dbReference type="PaxDb" id="39947-P46773"/>
<dbReference type="GeneID" id="6450196"/>
<dbReference type="KEGG" id="osa:6450196"/>
<dbReference type="InParanoid" id="P46773"/>
<dbReference type="OrthoDB" id="768530at2759"/>
<dbReference type="Proteomes" id="UP000059680">
    <property type="component" value="Mitochondrion"/>
</dbReference>
<dbReference type="GO" id="GO:0005739">
    <property type="term" value="C:mitochondrion"/>
    <property type="evidence" value="ECO:0000250"/>
    <property type="project" value="Gramene"/>
</dbReference>
<dbReference type="GO" id="GO:1990904">
    <property type="term" value="C:ribonucleoprotein complex"/>
    <property type="evidence" value="ECO:0007669"/>
    <property type="project" value="UniProtKB-KW"/>
</dbReference>
<dbReference type="GO" id="GO:0005840">
    <property type="term" value="C:ribosome"/>
    <property type="evidence" value="ECO:0007669"/>
    <property type="project" value="UniProtKB-KW"/>
</dbReference>
<dbReference type="GO" id="GO:0003723">
    <property type="term" value="F:RNA binding"/>
    <property type="evidence" value="ECO:0007669"/>
    <property type="project" value="InterPro"/>
</dbReference>
<dbReference type="GO" id="GO:0003735">
    <property type="term" value="F:structural constituent of ribosome"/>
    <property type="evidence" value="ECO:0007669"/>
    <property type="project" value="InterPro"/>
</dbReference>
<dbReference type="GO" id="GO:0006412">
    <property type="term" value="P:translation"/>
    <property type="evidence" value="ECO:0007669"/>
    <property type="project" value="InterPro"/>
</dbReference>
<dbReference type="FunFam" id="3.30.1140.32:FF:000008">
    <property type="entry name" value="Ribosomal protein S3"/>
    <property type="match status" value="1"/>
</dbReference>
<dbReference type="Gene3D" id="3.30.1140.32">
    <property type="entry name" value="Ribosomal protein S3, C-terminal domain"/>
    <property type="match status" value="1"/>
</dbReference>
<dbReference type="InterPro" id="IPR009019">
    <property type="entry name" value="KH_sf_prok-type"/>
</dbReference>
<dbReference type="InterPro" id="IPR036419">
    <property type="entry name" value="Ribosomal_S3_C_sf"/>
</dbReference>
<dbReference type="InterPro" id="IPR001351">
    <property type="entry name" value="Ribosomal_uS3_C"/>
</dbReference>
<dbReference type="InterPro" id="IPR018280">
    <property type="entry name" value="Ribosomal_uS3_CS"/>
</dbReference>
<dbReference type="InterPro" id="IPR044954">
    <property type="entry name" value="Ribosomal_uS3m_plant"/>
</dbReference>
<dbReference type="PANTHER" id="PTHR35928">
    <property type="entry name" value="RIBOSOMAL PROTEIN S3, MITOCHONDRIAL"/>
    <property type="match status" value="1"/>
</dbReference>
<dbReference type="PANTHER" id="PTHR35928:SF2">
    <property type="entry name" value="SMALL RIBOSOMAL SUBUNIT PROTEIN US3M"/>
    <property type="match status" value="1"/>
</dbReference>
<dbReference type="Pfam" id="PF00189">
    <property type="entry name" value="Ribosomal_S3_C"/>
    <property type="match status" value="1"/>
</dbReference>
<dbReference type="SUPFAM" id="SSF54814">
    <property type="entry name" value="Prokaryotic type KH domain (KH-domain type II)"/>
    <property type="match status" value="1"/>
</dbReference>
<dbReference type="SUPFAM" id="SSF54821">
    <property type="entry name" value="Ribosomal protein S3 C-terminal domain"/>
    <property type="match status" value="1"/>
</dbReference>
<dbReference type="PROSITE" id="PS00548">
    <property type="entry name" value="RIBOSOMAL_S3"/>
    <property type="match status" value="1"/>
</dbReference>
<accession>P46773</accession>
<organism>
    <name type="scientific">Oryza sativa subsp. japonica</name>
    <name type="common">Rice</name>
    <dbReference type="NCBI Taxonomy" id="39947"/>
    <lineage>
        <taxon>Eukaryota</taxon>
        <taxon>Viridiplantae</taxon>
        <taxon>Streptophyta</taxon>
        <taxon>Embryophyta</taxon>
        <taxon>Tracheophyta</taxon>
        <taxon>Spermatophyta</taxon>
        <taxon>Magnoliopsida</taxon>
        <taxon>Liliopsida</taxon>
        <taxon>Poales</taxon>
        <taxon>Poaceae</taxon>
        <taxon>BOP clade</taxon>
        <taxon>Oryzoideae</taxon>
        <taxon>Oryzeae</taxon>
        <taxon>Oryzinae</taxon>
        <taxon>Oryza</taxon>
        <taxon>Oryza sativa</taxon>
    </lineage>
</organism>
<feature type="chain" id="PRO_0000130316" description="Small ribosomal subunit protein uS3m">
    <location>
        <begin position="1"/>
        <end position="538"/>
    </location>
</feature>
<feature type="region of interest" description="Disordered" evidence="1">
    <location>
        <begin position="111"/>
        <end position="134"/>
    </location>
</feature>
<feature type="compositionally biased region" description="Basic and acidic residues" evidence="1">
    <location>
        <begin position="120"/>
        <end position="134"/>
    </location>
</feature>
<geneLocation type="mitochondrion"/>
<comment type="subcellular location">
    <subcellularLocation>
        <location>Mitochondrion</location>
    </subcellularLocation>
</comment>
<comment type="similarity">
    <text evidence="2">Belongs to the universal ribosomal protein uS3 family.</text>
</comment>
<keyword id="KW-0496">Mitochondrion</keyword>
<keyword id="KW-1185">Reference proteome</keyword>
<keyword id="KW-0687">Ribonucleoprotein</keyword>
<keyword id="KW-0689">Ribosomal protein</keyword>
<protein>
    <recommendedName>
        <fullName evidence="2">Small ribosomal subunit protein uS3m</fullName>
    </recommendedName>
    <alternativeName>
        <fullName>Ribosomal protein S3, mitochondrial</fullName>
    </alternativeName>
</protein>
<gene>
    <name type="primary">RPS3</name>
</gene>
<evidence type="ECO:0000256" key="1">
    <source>
        <dbReference type="SAM" id="MobiDB-lite"/>
    </source>
</evidence>
<evidence type="ECO:0000305" key="2"/>